<gene>
    <name type="primary">SERPINE1</name>
    <name type="synonym">PAI1</name>
</gene>
<protein>
    <recommendedName>
        <fullName>Plasminogen activator inhibitor 1</fullName>
        <shortName>PAI</shortName>
        <shortName>PAI-1</shortName>
    </recommendedName>
    <alternativeName>
        <fullName>Endothelial plasminogen activator inhibitor</fullName>
    </alternativeName>
    <alternativeName>
        <fullName>Serpin E1</fullName>
    </alternativeName>
</protein>
<evidence type="ECO:0000250" key="1">
    <source>
        <dbReference type="UniProtKB" id="P05121"/>
    </source>
</evidence>
<evidence type="ECO:0000250" key="2">
    <source>
        <dbReference type="UniProtKB" id="P22777"/>
    </source>
</evidence>
<evidence type="ECO:0000255" key="3"/>
<evidence type="ECO:0000269" key="4">
    <source>
    </source>
</evidence>
<evidence type="ECO:0000305" key="5"/>
<sequence length="402" mass="45371">MRMSPVFACLALGLALIFGEGSASYQPQSAAASLATDFGVKVFQQVVRASKDRNVVFSPYGVASVLAMLQLTTGGETRQQIQEAMQFKIEEKGMAPAFHRLYKELMGPWNKDEISTADAIFVQRDLELVHGFMPNFFRLFRTTVKQVDFSEVERARFIVNDWVKRHTKGMISDLLGEGAVDQLTRLVLVNALYFNGQWKMPFPESNTHHRLFHKSDGSTISVPMMAQTNKFNYTEFTTPDGRYYDILELPYHGNTLSMLIAAPYEKEVPLSALTSILDAELISQWKGNMTRLTRLLVLPKFSLETEIDLRRPLENLGMTDMFRPSQADFSSFSDQEFLYVSQALQKVKIEVNESGTLASSSTALVVSARMAPEEIIMDRPFLFVVRHNPTGTVLFMGQVMEP</sequence>
<feature type="signal peptide" evidence="4">
    <location>
        <begin position="1"/>
        <end position="23"/>
    </location>
</feature>
<feature type="chain" id="PRO_0000032498" description="Plasminogen activator inhibitor 1">
    <location>
        <begin position="24"/>
        <end position="402"/>
    </location>
</feature>
<feature type="site" description="Reactive bond">
    <location>
        <begin position="369"/>
        <end position="370"/>
    </location>
</feature>
<feature type="glycosylation site" description="N-linked (GlcNAc...) asparagine" evidence="3">
    <location>
        <position position="232"/>
    </location>
</feature>
<feature type="glycosylation site" description="N-linked (GlcNAc...) asparagine" evidence="3">
    <location>
        <position position="288"/>
    </location>
</feature>
<feature type="glycosylation site" description="N-linked (GlcNAc...) asparagine" evidence="3">
    <location>
        <position position="352"/>
    </location>
</feature>
<feature type="sequence conflict" description="In Ref. 3." evidence="5" ref="3">
    <original>S</original>
    <variation>L</variation>
    <location>
        <position position="50"/>
    </location>
</feature>
<reference key="1">
    <citation type="journal article" date="1989" name="Nucleic Acids Res.">
        <title>cDNA for bovine type 1 plasminogen activator inhibitor (PAI-1).</title>
        <authorList>
            <person name="Mimuro J."/>
            <person name="Sawdey M."/>
            <person name="Hatiori M."/>
            <person name="Loskutoff D.J."/>
        </authorList>
    </citation>
    <scope>NUCLEOTIDE SEQUENCE [MRNA]</scope>
</reference>
<reference key="2">
    <citation type="journal article" date="2005" name="BMC Genomics">
        <title>Characterization of 954 bovine full-CDS cDNA sequences.</title>
        <authorList>
            <person name="Harhay G.P."/>
            <person name="Sonstegard T.S."/>
            <person name="Keele J.W."/>
            <person name="Heaton M.P."/>
            <person name="Clawson M.L."/>
            <person name="Snelling W.M."/>
            <person name="Wiedmann R.T."/>
            <person name="Van Tassell C.P."/>
            <person name="Smith T.P.L."/>
        </authorList>
    </citation>
    <scope>NUCLEOTIDE SEQUENCE [LARGE SCALE MRNA]</scope>
</reference>
<reference key="3">
    <citation type="submission" date="2005-08" db="EMBL/GenBank/DDBJ databases">
        <authorList>
            <consortium name="NIH - Mammalian Gene Collection (MGC) project"/>
        </authorList>
    </citation>
    <scope>NUCLEOTIDE SEQUENCE [LARGE SCALE MRNA]</scope>
    <source>
        <strain>Hereford</strain>
        <tissue>Fetal liver</tissue>
    </source>
</reference>
<reference key="4">
    <citation type="journal article" date="1988" name="Eur. J. Biochem.">
        <title>Bovine endothelial cell plasminogen activator inhibitor. Purification and heat activation.</title>
        <authorList>
            <person name="Katagiri K."/>
            <person name="Okada K."/>
            <person name="Hattori H."/>
            <person name="Yano M."/>
        </authorList>
    </citation>
    <scope>PROTEIN SEQUENCE OF 24-63</scope>
</reference>
<reference key="5">
    <citation type="journal article" date="1990" name="J. Cell Biol.">
        <title>Transforming growth factor-beta 1 modulates basic fibroblast growth factor-induced proteolytic and angiogenic properties of endothelial cells in vitro.</title>
        <authorList>
            <person name="Pepper M.S."/>
            <person name="Belin D."/>
            <person name="Montesano R."/>
            <person name="Orci L."/>
            <person name="Vassalli J.-D."/>
        </authorList>
    </citation>
    <scope>NUCLEOTIDE SEQUENCE [MRNA] OF 153-235</scope>
    <source>
        <tissue>Adrenal cortex</tissue>
    </source>
</reference>
<organism>
    <name type="scientific">Bos taurus</name>
    <name type="common">Bovine</name>
    <dbReference type="NCBI Taxonomy" id="9913"/>
    <lineage>
        <taxon>Eukaryota</taxon>
        <taxon>Metazoa</taxon>
        <taxon>Chordata</taxon>
        <taxon>Craniata</taxon>
        <taxon>Vertebrata</taxon>
        <taxon>Euteleostomi</taxon>
        <taxon>Mammalia</taxon>
        <taxon>Eutheria</taxon>
        <taxon>Laurasiatheria</taxon>
        <taxon>Artiodactyla</taxon>
        <taxon>Ruminantia</taxon>
        <taxon>Pecora</taxon>
        <taxon>Bovidae</taxon>
        <taxon>Bovinae</taxon>
        <taxon>Bos</taxon>
    </lineage>
</organism>
<comment type="function">
    <text evidence="1 2">Serine protease inhibitor. Inhibits TMPRSS7. Is a primary inhibitor of tissue-type plasminogen activator (PLAT) and urokinase-type plasminogen activator (PLAU). As PLAT inhibitor, it is required for fibrinolysis down-regulation and is responsible for the controlled degradation of blood clots. As PLAU inhibitor, it is involved in the regulation of cell adhesion and spreading. Acts as a regulator of cell migration, independently of its role as protease inhibitor. It is required for stimulation of keratinocyte migration during cutaneous injury repair. It is involved in cellular and replicative senescence (By similarity). Plays a role in alveolar type 2 cells senescence in the lung (By similarity). Is involved in the regulation of cementogenic differentiation of periodontal ligament stem cells, and regulates odontoblast differentiation and dentin formation during odontogenesis (By similarity).</text>
</comment>
<comment type="subunit">
    <text evidence="1">Forms a heterodimer with TMPRSS7. Interacts with VTN. Binds LRP1B; binding is followed by internalization and degradation. Interacts with PPP1CB. In complex with PLAU/uPA, interacts with PLAUR/uPAR (By similarity). Interacts with SORL1 and LRP1, either alone or in complex with PLAU; these interactions are abolished in the presence of LRPAP1/RAP (By similarity). The ternary complex composed of PLAUR-PLAU-PAI1 also interacts with SORL1 (By similarity). Interacts with PLAT/tPA (By similarity). Also interacts with SORL1, when complexed to PLAT/tPA (By similarity).</text>
</comment>
<comment type="subcellular location">
    <subcellularLocation>
        <location evidence="1">Secreted</location>
    </subcellularLocation>
</comment>
<comment type="tissue specificity">
    <text>Vascular endothelial cells may be the primary site of synthesis of plasma PAI1.</text>
</comment>
<comment type="similarity">
    <text evidence="5">Belongs to the serpin family.</text>
</comment>
<proteinExistence type="evidence at protein level"/>
<accession>P13909</accession>
<accession>Q3ZBB9</accession>
<dbReference type="EMBL" id="X16383">
    <property type="protein sequence ID" value="CAA34419.1"/>
    <property type="molecule type" value="mRNA"/>
</dbReference>
<dbReference type="EMBL" id="BT025406">
    <property type="protein sequence ID" value="ABF57362.1"/>
    <property type="molecule type" value="mRNA"/>
</dbReference>
<dbReference type="EMBL" id="BC103451">
    <property type="protein sequence ID" value="AAI03452.1"/>
    <property type="molecule type" value="mRNA"/>
</dbReference>
<dbReference type="EMBL" id="X52906">
    <property type="protein sequence ID" value="CAA37094.1"/>
    <property type="molecule type" value="mRNA"/>
</dbReference>
<dbReference type="PIR" id="S06745">
    <property type="entry name" value="S06745"/>
</dbReference>
<dbReference type="RefSeq" id="NP_776562.1">
    <property type="nucleotide sequence ID" value="NM_174137.2"/>
</dbReference>
<dbReference type="RefSeq" id="XP_010817781.1">
    <property type="nucleotide sequence ID" value="XM_010819479.4"/>
</dbReference>
<dbReference type="SMR" id="P13909"/>
<dbReference type="FunCoup" id="P13909">
    <property type="interactions" value="203"/>
</dbReference>
<dbReference type="STRING" id="9913.ENSBTAP00000019232"/>
<dbReference type="MEROPS" id="I04.020"/>
<dbReference type="GlyCosmos" id="P13909">
    <property type="glycosylation" value="3 sites, No reported glycans"/>
</dbReference>
<dbReference type="GlyGen" id="P13909">
    <property type="glycosylation" value="3 sites"/>
</dbReference>
<dbReference type="PaxDb" id="9913-ENSBTAP00000019232"/>
<dbReference type="GeneID" id="281375"/>
<dbReference type="KEGG" id="bta:281375"/>
<dbReference type="CTD" id="5054"/>
<dbReference type="eggNOG" id="KOG2392">
    <property type="taxonomic scope" value="Eukaryota"/>
</dbReference>
<dbReference type="HOGENOM" id="CLU_023330_0_4_1"/>
<dbReference type="InParanoid" id="P13909"/>
<dbReference type="OrthoDB" id="8179360at2759"/>
<dbReference type="TreeFam" id="TF352620"/>
<dbReference type="Proteomes" id="UP000009136">
    <property type="component" value="Unplaced"/>
</dbReference>
<dbReference type="GO" id="GO:0005615">
    <property type="term" value="C:extracellular space"/>
    <property type="evidence" value="ECO:0000318"/>
    <property type="project" value="GO_Central"/>
</dbReference>
<dbReference type="GO" id="GO:0004857">
    <property type="term" value="F:enzyme inhibitor activity"/>
    <property type="evidence" value="ECO:0000314"/>
    <property type="project" value="AgBase"/>
</dbReference>
<dbReference type="GO" id="GO:0004867">
    <property type="term" value="F:serine-type endopeptidase inhibitor activity"/>
    <property type="evidence" value="ECO:0000318"/>
    <property type="project" value="GO_Central"/>
</dbReference>
<dbReference type="GO" id="GO:0035375">
    <property type="term" value="F:zymogen binding"/>
    <property type="evidence" value="ECO:0000353"/>
    <property type="project" value="AgBase"/>
</dbReference>
<dbReference type="GO" id="GO:0010757">
    <property type="term" value="P:negative regulation of plasminogen activation"/>
    <property type="evidence" value="ECO:0000318"/>
    <property type="project" value="GO_Central"/>
</dbReference>
<dbReference type="GO" id="GO:0061044">
    <property type="term" value="P:negative regulation of vascular wound healing"/>
    <property type="evidence" value="ECO:0000318"/>
    <property type="project" value="GO_Central"/>
</dbReference>
<dbReference type="GO" id="GO:0050820">
    <property type="term" value="P:positive regulation of coagulation"/>
    <property type="evidence" value="ECO:0000318"/>
    <property type="project" value="GO_Central"/>
</dbReference>
<dbReference type="GO" id="GO:0090399">
    <property type="term" value="P:replicative senescence"/>
    <property type="evidence" value="ECO:0000250"/>
    <property type="project" value="UniProtKB"/>
</dbReference>
<dbReference type="FunFam" id="2.30.39.10:FF:000006">
    <property type="entry name" value="Plasminogen activator inhibitor 1"/>
    <property type="match status" value="1"/>
</dbReference>
<dbReference type="FunFam" id="3.30.497.10:FF:000006">
    <property type="entry name" value="Plasminogen activator inhibitor 1"/>
    <property type="match status" value="1"/>
</dbReference>
<dbReference type="Gene3D" id="2.30.39.10">
    <property type="entry name" value="Alpha-1-antitrypsin, domain 1"/>
    <property type="match status" value="1"/>
</dbReference>
<dbReference type="Gene3D" id="3.30.497.10">
    <property type="entry name" value="Antithrombin, subunit I, domain 2"/>
    <property type="match status" value="1"/>
</dbReference>
<dbReference type="InterPro" id="IPR023795">
    <property type="entry name" value="Serpin_CS"/>
</dbReference>
<dbReference type="InterPro" id="IPR023796">
    <property type="entry name" value="Serpin_dom"/>
</dbReference>
<dbReference type="InterPro" id="IPR000215">
    <property type="entry name" value="Serpin_fam"/>
</dbReference>
<dbReference type="InterPro" id="IPR036186">
    <property type="entry name" value="Serpin_sf"/>
</dbReference>
<dbReference type="InterPro" id="IPR042178">
    <property type="entry name" value="Serpin_sf_1"/>
</dbReference>
<dbReference type="InterPro" id="IPR042185">
    <property type="entry name" value="Serpin_sf_2"/>
</dbReference>
<dbReference type="PANTHER" id="PTHR11461:SF49">
    <property type="entry name" value="PLASMINOGEN ACTIVATOR INHIBITOR 1"/>
    <property type="match status" value="1"/>
</dbReference>
<dbReference type="PANTHER" id="PTHR11461">
    <property type="entry name" value="SERINE PROTEASE INHIBITOR, SERPIN"/>
    <property type="match status" value="1"/>
</dbReference>
<dbReference type="Pfam" id="PF00079">
    <property type="entry name" value="Serpin"/>
    <property type="match status" value="1"/>
</dbReference>
<dbReference type="SMART" id="SM00093">
    <property type="entry name" value="SERPIN"/>
    <property type="match status" value="1"/>
</dbReference>
<dbReference type="SUPFAM" id="SSF56574">
    <property type="entry name" value="Serpins"/>
    <property type="match status" value="1"/>
</dbReference>
<dbReference type="PROSITE" id="PS00284">
    <property type="entry name" value="SERPIN"/>
    <property type="match status" value="1"/>
</dbReference>
<name>PAI1_BOVIN</name>
<keyword id="KW-0903">Direct protein sequencing</keyword>
<keyword id="KW-0325">Glycoprotein</keyword>
<keyword id="KW-0646">Protease inhibitor</keyword>
<keyword id="KW-1185">Reference proteome</keyword>
<keyword id="KW-0964">Secreted</keyword>
<keyword id="KW-0722">Serine protease inhibitor</keyword>
<keyword id="KW-0732">Signal</keyword>